<gene>
    <name evidence="1" type="primary">ssuD</name>
    <name type="ordered locus">Aave_3044</name>
</gene>
<accession>A1TRM3</accession>
<comment type="function">
    <text evidence="1">Catalyzes the desulfonation of aliphatic sulfonates.</text>
</comment>
<comment type="catalytic activity">
    <reaction evidence="1">
        <text>an alkanesulfonate + FMNH2 + O2 = an aldehyde + FMN + sulfite + H2O + 2 H(+)</text>
        <dbReference type="Rhea" id="RHEA:23064"/>
        <dbReference type="ChEBI" id="CHEBI:15377"/>
        <dbReference type="ChEBI" id="CHEBI:15378"/>
        <dbReference type="ChEBI" id="CHEBI:15379"/>
        <dbReference type="ChEBI" id="CHEBI:17359"/>
        <dbReference type="ChEBI" id="CHEBI:17478"/>
        <dbReference type="ChEBI" id="CHEBI:57618"/>
        <dbReference type="ChEBI" id="CHEBI:58210"/>
        <dbReference type="ChEBI" id="CHEBI:134249"/>
        <dbReference type="EC" id="1.14.14.5"/>
    </reaction>
</comment>
<comment type="similarity">
    <text evidence="1">Belongs to the SsuD family.</text>
</comment>
<dbReference type="EC" id="1.14.14.5" evidence="1"/>
<dbReference type="EMBL" id="CP000512">
    <property type="protein sequence ID" value="ABM33611.1"/>
    <property type="molecule type" value="Genomic_DNA"/>
</dbReference>
<dbReference type="RefSeq" id="WP_011796121.1">
    <property type="nucleotide sequence ID" value="NC_008752.1"/>
</dbReference>
<dbReference type="SMR" id="A1TRM3"/>
<dbReference type="STRING" id="397945.Aave_3044"/>
<dbReference type="GeneID" id="79792729"/>
<dbReference type="KEGG" id="aav:Aave_3044"/>
<dbReference type="eggNOG" id="COG2141">
    <property type="taxonomic scope" value="Bacteria"/>
</dbReference>
<dbReference type="HOGENOM" id="CLU_027853_1_0_4"/>
<dbReference type="OrthoDB" id="9814695at2"/>
<dbReference type="Proteomes" id="UP000002596">
    <property type="component" value="Chromosome"/>
</dbReference>
<dbReference type="GO" id="GO:0008726">
    <property type="term" value="F:alkanesulfonate monooxygenase activity"/>
    <property type="evidence" value="ECO:0007669"/>
    <property type="project" value="UniProtKB-UniRule"/>
</dbReference>
<dbReference type="GO" id="GO:0046306">
    <property type="term" value="P:alkanesulfonate catabolic process"/>
    <property type="evidence" value="ECO:0007669"/>
    <property type="project" value="TreeGrafter"/>
</dbReference>
<dbReference type="CDD" id="cd01094">
    <property type="entry name" value="Alkanesulfonate_monoxygenase"/>
    <property type="match status" value="1"/>
</dbReference>
<dbReference type="Gene3D" id="3.20.20.30">
    <property type="entry name" value="Luciferase-like domain"/>
    <property type="match status" value="1"/>
</dbReference>
<dbReference type="HAMAP" id="MF_01229">
    <property type="entry name" value="Alkanesulf_monooxygen"/>
    <property type="match status" value="1"/>
</dbReference>
<dbReference type="InterPro" id="IPR019911">
    <property type="entry name" value="Alkanesulphonate_mOase_FMN-dep"/>
</dbReference>
<dbReference type="InterPro" id="IPR011251">
    <property type="entry name" value="Luciferase-like_dom"/>
</dbReference>
<dbReference type="InterPro" id="IPR036661">
    <property type="entry name" value="Luciferase-like_sf"/>
</dbReference>
<dbReference type="InterPro" id="IPR050172">
    <property type="entry name" value="SsuD_RutA_monooxygenase"/>
</dbReference>
<dbReference type="NCBIfam" id="TIGR03565">
    <property type="entry name" value="alk_sulf_monoox"/>
    <property type="match status" value="1"/>
</dbReference>
<dbReference type="NCBIfam" id="NF001939">
    <property type="entry name" value="PRK00719.1"/>
    <property type="match status" value="1"/>
</dbReference>
<dbReference type="PANTHER" id="PTHR42847">
    <property type="entry name" value="ALKANESULFONATE MONOOXYGENASE"/>
    <property type="match status" value="1"/>
</dbReference>
<dbReference type="PANTHER" id="PTHR42847:SF4">
    <property type="entry name" value="ALKANESULFONATE MONOOXYGENASE-RELATED"/>
    <property type="match status" value="1"/>
</dbReference>
<dbReference type="Pfam" id="PF00296">
    <property type="entry name" value="Bac_luciferase"/>
    <property type="match status" value="1"/>
</dbReference>
<dbReference type="SUPFAM" id="SSF51679">
    <property type="entry name" value="Bacterial luciferase-like"/>
    <property type="match status" value="1"/>
</dbReference>
<sequence>MHVFWFIPTHGDSRYLGTSEGARAVHYDYLRQVATAADTLGYEGVLIPTGRSCEDPWVVASALAPVTRRLKFLVAVRPGLHQPALAARMAATFDRLSGGRLLINLVTGGDRTELEGDGVFLDHAQRYAQSEEFIRIWREILSRSHEGGTFDYEGEHLSVKGAKLLYPPVQKPYPPVYFGGSSEAAHDLAAEQVDTYLTWGEPPAAVAQKVADVRARAAQRGRTVRFGIRLHVIVRETDAAAWAAAEELISRVQDETVAQAQAVFSRMDSEGQRRMAALHAGGTRRSRADLEISPNLWAGVGLVRGGAGTALVGDPQTVAARMQEYADLGIDTFVLSGYPHLEEAYRFAELVFPLLPAEVRERIGGGRAAGPLTGPFGEIVGNQYVPRAAQS</sequence>
<keyword id="KW-0285">Flavoprotein</keyword>
<keyword id="KW-0288">FMN</keyword>
<keyword id="KW-0503">Monooxygenase</keyword>
<keyword id="KW-0560">Oxidoreductase</keyword>
<reference key="1">
    <citation type="submission" date="2006-12" db="EMBL/GenBank/DDBJ databases">
        <title>Complete sequence of Acidovorax avenae subsp. citrulli AAC00-1.</title>
        <authorList>
            <person name="Copeland A."/>
            <person name="Lucas S."/>
            <person name="Lapidus A."/>
            <person name="Barry K."/>
            <person name="Detter J.C."/>
            <person name="Glavina del Rio T."/>
            <person name="Dalin E."/>
            <person name="Tice H."/>
            <person name="Pitluck S."/>
            <person name="Kiss H."/>
            <person name="Brettin T."/>
            <person name="Bruce D."/>
            <person name="Han C."/>
            <person name="Tapia R."/>
            <person name="Gilna P."/>
            <person name="Schmutz J."/>
            <person name="Larimer F."/>
            <person name="Land M."/>
            <person name="Hauser L."/>
            <person name="Kyrpides N."/>
            <person name="Kim E."/>
            <person name="Stahl D."/>
            <person name="Richardson P."/>
        </authorList>
    </citation>
    <scope>NUCLEOTIDE SEQUENCE [LARGE SCALE GENOMIC DNA]</scope>
    <source>
        <strain>AAC00-1</strain>
    </source>
</reference>
<protein>
    <recommendedName>
        <fullName evidence="1">Alkanesulfonate monooxygenase</fullName>
        <ecNumber evidence="1">1.14.14.5</ecNumber>
    </recommendedName>
    <alternativeName>
        <fullName evidence="1">FMNH2-dependent aliphatic sulfonate monooxygenase</fullName>
    </alternativeName>
</protein>
<name>SSUD_PARC0</name>
<proteinExistence type="inferred from homology"/>
<organism>
    <name type="scientific">Paracidovorax citrulli (strain AAC00-1)</name>
    <name type="common">Acidovorax citrulli</name>
    <dbReference type="NCBI Taxonomy" id="397945"/>
    <lineage>
        <taxon>Bacteria</taxon>
        <taxon>Pseudomonadati</taxon>
        <taxon>Pseudomonadota</taxon>
        <taxon>Betaproteobacteria</taxon>
        <taxon>Burkholderiales</taxon>
        <taxon>Comamonadaceae</taxon>
        <taxon>Paracidovorax</taxon>
    </lineage>
</organism>
<feature type="chain" id="PRO_1000066815" description="Alkanesulfonate monooxygenase">
    <location>
        <begin position="1"/>
        <end position="391"/>
    </location>
</feature>
<evidence type="ECO:0000255" key="1">
    <source>
        <dbReference type="HAMAP-Rule" id="MF_01229"/>
    </source>
</evidence>